<comment type="function">
    <text evidence="1">Mediates both low-affinity uptake and efflux of sugar across the plasma membrane.</text>
</comment>
<comment type="subunit">
    <text evidence="1">Forms homooligomers and/or heterooligomers.</text>
</comment>
<comment type="subcellular location">
    <subcellularLocation>
        <location evidence="1">Cell membrane</location>
        <topology evidence="1">Multi-pass membrane protein</topology>
    </subcellularLocation>
</comment>
<comment type="similarity">
    <text evidence="3">Belongs to the SWEET sugar transporter family.</text>
</comment>
<gene>
    <name type="primary">SWEET4</name>
    <name type="ORF">OsI_06860</name>
</gene>
<reference key="1">
    <citation type="journal article" date="2005" name="PLoS Biol.">
        <title>The genomes of Oryza sativa: a history of duplications.</title>
        <authorList>
            <person name="Yu J."/>
            <person name="Wang J."/>
            <person name="Lin W."/>
            <person name="Li S."/>
            <person name="Li H."/>
            <person name="Zhou J."/>
            <person name="Ni P."/>
            <person name="Dong W."/>
            <person name="Hu S."/>
            <person name="Zeng C."/>
            <person name="Zhang J."/>
            <person name="Zhang Y."/>
            <person name="Li R."/>
            <person name="Xu Z."/>
            <person name="Li S."/>
            <person name="Li X."/>
            <person name="Zheng H."/>
            <person name="Cong L."/>
            <person name="Lin L."/>
            <person name="Yin J."/>
            <person name="Geng J."/>
            <person name="Li G."/>
            <person name="Shi J."/>
            <person name="Liu J."/>
            <person name="Lv H."/>
            <person name="Li J."/>
            <person name="Wang J."/>
            <person name="Deng Y."/>
            <person name="Ran L."/>
            <person name="Shi X."/>
            <person name="Wang X."/>
            <person name="Wu Q."/>
            <person name="Li C."/>
            <person name="Ren X."/>
            <person name="Wang J."/>
            <person name="Wang X."/>
            <person name="Li D."/>
            <person name="Liu D."/>
            <person name="Zhang X."/>
            <person name="Ji Z."/>
            <person name="Zhao W."/>
            <person name="Sun Y."/>
            <person name="Zhang Z."/>
            <person name="Bao J."/>
            <person name="Han Y."/>
            <person name="Dong L."/>
            <person name="Ji J."/>
            <person name="Chen P."/>
            <person name="Wu S."/>
            <person name="Liu J."/>
            <person name="Xiao Y."/>
            <person name="Bu D."/>
            <person name="Tan J."/>
            <person name="Yang L."/>
            <person name="Ye C."/>
            <person name="Zhang J."/>
            <person name="Xu J."/>
            <person name="Zhou Y."/>
            <person name="Yu Y."/>
            <person name="Zhang B."/>
            <person name="Zhuang S."/>
            <person name="Wei H."/>
            <person name="Liu B."/>
            <person name="Lei M."/>
            <person name="Yu H."/>
            <person name="Li Y."/>
            <person name="Xu H."/>
            <person name="Wei S."/>
            <person name="He X."/>
            <person name="Fang L."/>
            <person name="Zhang Z."/>
            <person name="Zhang Y."/>
            <person name="Huang X."/>
            <person name="Su Z."/>
            <person name="Tong W."/>
            <person name="Li J."/>
            <person name="Tong Z."/>
            <person name="Li S."/>
            <person name="Ye J."/>
            <person name="Wang L."/>
            <person name="Fang L."/>
            <person name="Lei T."/>
            <person name="Chen C.-S."/>
            <person name="Chen H.-C."/>
            <person name="Xu Z."/>
            <person name="Li H."/>
            <person name="Huang H."/>
            <person name="Zhang F."/>
            <person name="Xu H."/>
            <person name="Li N."/>
            <person name="Zhao C."/>
            <person name="Li S."/>
            <person name="Dong L."/>
            <person name="Huang Y."/>
            <person name="Li L."/>
            <person name="Xi Y."/>
            <person name="Qi Q."/>
            <person name="Li W."/>
            <person name="Zhang B."/>
            <person name="Hu W."/>
            <person name="Zhang Y."/>
            <person name="Tian X."/>
            <person name="Jiao Y."/>
            <person name="Liang X."/>
            <person name="Jin J."/>
            <person name="Gao L."/>
            <person name="Zheng W."/>
            <person name="Hao B."/>
            <person name="Liu S.-M."/>
            <person name="Wang W."/>
            <person name="Yuan L."/>
            <person name="Cao M."/>
            <person name="McDermott J."/>
            <person name="Samudrala R."/>
            <person name="Wang J."/>
            <person name="Wong G.K.-S."/>
            <person name="Yang H."/>
        </authorList>
    </citation>
    <scope>NUCLEOTIDE SEQUENCE [LARGE SCALE GENOMIC DNA]</scope>
    <source>
        <strain>cv. 93-11</strain>
    </source>
</reference>
<reference key="2">
    <citation type="submission" date="2007-04" db="EMBL/GenBank/DDBJ databases">
        <title>A comparative transcriptome map of early and late salinity stress responses in contrasting genotypes of Oryza sativa L.</title>
        <authorList>
            <person name="Kumari S."/>
            <person name="Panjabi V."/>
            <person name="Singla-Pareek S.L."/>
            <person name="Sopory S.K."/>
            <person name="Pareek A."/>
        </authorList>
    </citation>
    <scope>NUCLEOTIDE SEQUENCE [LARGE SCALE MRNA] OF 119-259</scope>
    <source>
        <tissue>Shoot</tissue>
    </source>
</reference>
<evidence type="ECO:0000250" key="1">
    <source>
        <dbReference type="UniProtKB" id="Q8L9J7"/>
    </source>
</evidence>
<evidence type="ECO:0000255" key="2"/>
<evidence type="ECO:0000305" key="3"/>
<feature type="chain" id="PRO_0000404142" description="Bidirectional sugar transporter SWEET4">
    <location>
        <begin position="1"/>
        <end position="259"/>
    </location>
</feature>
<feature type="topological domain" description="Extracellular" evidence="2">
    <location>
        <begin position="1"/>
        <end position="10"/>
    </location>
</feature>
<feature type="transmembrane region" description="Helical; Name=1" evidence="2">
    <location>
        <begin position="11"/>
        <end position="31"/>
    </location>
</feature>
<feature type="topological domain" description="Cytoplasmic" evidence="2">
    <location>
        <begin position="32"/>
        <end position="44"/>
    </location>
</feature>
<feature type="transmembrane region" description="Helical; Name=2" evidence="2">
    <location>
        <begin position="45"/>
        <end position="65"/>
    </location>
</feature>
<feature type="topological domain" description="Extracellular" evidence="2">
    <location>
        <begin position="66"/>
        <end position="77"/>
    </location>
</feature>
<feature type="transmembrane region" description="Helical; Name=3" evidence="2">
    <location>
        <begin position="78"/>
        <end position="98"/>
    </location>
</feature>
<feature type="topological domain" description="Cytoplasmic" evidence="2">
    <location>
        <begin position="99"/>
        <end position="101"/>
    </location>
</feature>
<feature type="transmembrane region" description="Helical; Name=4" evidence="2">
    <location>
        <begin position="102"/>
        <end position="122"/>
    </location>
</feature>
<feature type="topological domain" description="Extracellular" evidence="2">
    <location>
        <begin position="123"/>
        <end position="131"/>
    </location>
</feature>
<feature type="transmembrane region" description="Helical; Name=5" evidence="2">
    <location>
        <begin position="132"/>
        <end position="152"/>
    </location>
</feature>
<feature type="topological domain" description="Cytoplasmic" evidence="2">
    <location>
        <begin position="153"/>
        <end position="165"/>
    </location>
</feature>
<feature type="transmembrane region" description="Helical; Name=6" evidence="2">
    <location>
        <begin position="166"/>
        <end position="186"/>
    </location>
</feature>
<feature type="topological domain" description="Extracellular" evidence="2">
    <location>
        <begin position="187"/>
        <end position="191"/>
    </location>
</feature>
<feature type="transmembrane region" description="Helical; Name=7" evidence="2">
    <location>
        <begin position="192"/>
        <end position="212"/>
    </location>
</feature>
<feature type="topological domain" description="Cytoplasmic" evidence="2">
    <location>
        <begin position="213"/>
        <end position="259"/>
    </location>
</feature>
<feature type="domain" description="MtN3/slv 1">
    <location>
        <begin position="10"/>
        <end position="94"/>
    </location>
</feature>
<feature type="domain" description="MtN3/slv 2">
    <location>
        <begin position="133"/>
        <end position="217"/>
    </location>
</feature>
<feature type="glycosylation site" description="N-linked (GlcNAc...) asparagine" evidence="2">
    <location>
        <position position="76"/>
    </location>
</feature>
<organism>
    <name type="scientific">Oryza sativa subsp. indica</name>
    <name type="common">Rice</name>
    <dbReference type="NCBI Taxonomy" id="39946"/>
    <lineage>
        <taxon>Eukaryota</taxon>
        <taxon>Viridiplantae</taxon>
        <taxon>Streptophyta</taxon>
        <taxon>Embryophyta</taxon>
        <taxon>Tracheophyta</taxon>
        <taxon>Spermatophyta</taxon>
        <taxon>Magnoliopsida</taxon>
        <taxon>Liliopsida</taxon>
        <taxon>Poales</taxon>
        <taxon>Poaceae</taxon>
        <taxon>BOP clade</taxon>
        <taxon>Oryzoideae</taxon>
        <taxon>Oryzeae</taxon>
        <taxon>Oryzinae</taxon>
        <taxon>Oryza</taxon>
        <taxon>Oryza sativa</taxon>
    </lineage>
</organism>
<protein>
    <recommendedName>
        <fullName>Bidirectional sugar transporter SWEET4</fullName>
        <shortName>OsSWEET4</shortName>
    </recommendedName>
</protein>
<sequence>MVSPDTIRTAIGVVGNGTALVLFLSPVPTFIRIWKKGSVEQYSAVPYVATLLNCMMWVLYGLPAVHPHSMLVITINGTGMAIELTYIALFLAFSLGAVRRRVLLLLAAEVAFVAAVAALVLNLAHTHERRSMIVGILCVLFGTGMYAAPLSVMKMVIQTKSVEYMPLFLSLASLVNGICWTAYALIRFDLYITIPNGLGVMFAVAQLILYAIYYKSTQQIIEARKRKEADHVAMTDVVVDSAKNNPSSGAAAAAANGRY</sequence>
<proteinExistence type="evidence at transcript level"/>
<dbReference type="EMBL" id="CM000127">
    <property type="protein sequence ID" value="EAY85483.1"/>
    <property type="molecule type" value="Genomic_DNA"/>
</dbReference>
<dbReference type="EMBL" id="EF576338">
    <property type="protein sequence ID" value="ABR25926.1"/>
    <property type="molecule type" value="mRNA"/>
</dbReference>
<dbReference type="SMR" id="A2X3S3"/>
<dbReference type="STRING" id="39946.A2X3S3"/>
<dbReference type="GlyCosmos" id="A2X3S3">
    <property type="glycosylation" value="1 site, No reported glycans"/>
</dbReference>
<dbReference type="EnsemblPlants" id="BGIOSGA006640-TA">
    <property type="protein sequence ID" value="BGIOSGA006640-PA"/>
    <property type="gene ID" value="BGIOSGA006640"/>
</dbReference>
<dbReference type="EnsemblPlants" id="OsGoSa_02g0013720.01">
    <property type="protein sequence ID" value="OsGoSa_02g0013720.01"/>
    <property type="gene ID" value="OsGoSa_02g0013720"/>
</dbReference>
<dbReference type="EnsemblPlants" id="OsIR64_02g0013110.01">
    <property type="protein sequence ID" value="OsIR64_02g0013110.01"/>
    <property type="gene ID" value="OsIR64_02g0013110"/>
</dbReference>
<dbReference type="EnsemblPlants" id="OsKYG_02g0013220.01">
    <property type="protein sequence ID" value="OsKYG_02g0013220.01"/>
    <property type="gene ID" value="OsKYG_02g0013220"/>
</dbReference>
<dbReference type="EnsemblPlants" id="OsLaMu_02g0013370.01">
    <property type="protein sequence ID" value="OsLaMu_02g0013370.01"/>
    <property type="gene ID" value="OsLaMu_02g0013370"/>
</dbReference>
<dbReference type="EnsemblPlants" id="OsLima_02g0013660.01">
    <property type="protein sequence ID" value="OsLima_02g0013660.01"/>
    <property type="gene ID" value="OsLima_02g0013660"/>
</dbReference>
<dbReference type="EnsemblPlants" id="OsLiXu_02g0013570.01">
    <property type="protein sequence ID" value="OsLiXu_02g0013570.01"/>
    <property type="gene ID" value="OsLiXu_02g0013570"/>
</dbReference>
<dbReference type="EnsemblPlants" id="OsLiXu_Ung0008630.01">
    <property type="protein sequence ID" value="OsLiXu_Ung0008630.01"/>
    <property type="gene ID" value="OsLiXu_Ung0008630"/>
</dbReference>
<dbReference type="EnsemblPlants" id="OsMH63_02G013630_01">
    <property type="protein sequence ID" value="OsMH63_02G013630_01"/>
    <property type="gene ID" value="OsMH63_02G013630"/>
</dbReference>
<dbReference type="EnsemblPlants" id="OsPr106_02g0013330.01">
    <property type="protein sequence ID" value="OsPr106_02g0013330.01"/>
    <property type="gene ID" value="OsPr106_02g0013330"/>
</dbReference>
<dbReference type="EnsemblPlants" id="OsZS97_02G013210_01">
    <property type="protein sequence ID" value="OsZS97_02G013210_01"/>
    <property type="gene ID" value="OsZS97_02G013210"/>
</dbReference>
<dbReference type="Gramene" id="BGIOSGA006640-TA">
    <property type="protein sequence ID" value="BGIOSGA006640-PA"/>
    <property type="gene ID" value="BGIOSGA006640"/>
</dbReference>
<dbReference type="Gramene" id="OsGoSa_02g0013720.01">
    <property type="protein sequence ID" value="OsGoSa_02g0013720.01"/>
    <property type="gene ID" value="OsGoSa_02g0013720"/>
</dbReference>
<dbReference type="Gramene" id="OsIR64_02g0013110.01">
    <property type="protein sequence ID" value="OsIR64_02g0013110.01"/>
    <property type="gene ID" value="OsIR64_02g0013110"/>
</dbReference>
<dbReference type="Gramene" id="OsKYG_02g0013220.01">
    <property type="protein sequence ID" value="OsKYG_02g0013220.01"/>
    <property type="gene ID" value="OsKYG_02g0013220"/>
</dbReference>
<dbReference type="Gramene" id="OsLaMu_02g0013370.01">
    <property type="protein sequence ID" value="OsLaMu_02g0013370.01"/>
    <property type="gene ID" value="OsLaMu_02g0013370"/>
</dbReference>
<dbReference type="Gramene" id="OsLima_02g0013660.01">
    <property type="protein sequence ID" value="OsLima_02g0013660.01"/>
    <property type="gene ID" value="OsLima_02g0013660"/>
</dbReference>
<dbReference type="Gramene" id="OsLiXu_02g0013570.01">
    <property type="protein sequence ID" value="OsLiXu_02g0013570.01"/>
    <property type="gene ID" value="OsLiXu_02g0013570"/>
</dbReference>
<dbReference type="Gramene" id="OsLiXu_Ung0008630.01">
    <property type="protein sequence ID" value="OsLiXu_Ung0008630.01"/>
    <property type="gene ID" value="OsLiXu_Ung0008630"/>
</dbReference>
<dbReference type="Gramene" id="OsMH63_02G013630_01">
    <property type="protein sequence ID" value="OsMH63_02G013630_01"/>
    <property type="gene ID" value="OsMH63_02G013630"/>
</dbReference>
<dbReference type="Gramene" id="OsPr106_02g0013330.01">
    <property type="protein sequence ID" value="OsPr106_02g0013330.01"/>
    <property type="gene ID" value="OsPr106_02g0013330"/>
</dbReference>
<dbReference type="Gramene" id="OsZS97_02G013210_01">
    <property type="protein sequence ID" value="OsZS97_02G013210_01"/>
    <property type="gene ID" value="OsZS97_02G013210"/>
</dbReference>
<dbReference type="HOGENOM" id="CLU_048643_1_0_1"/>
<dbReference type="OMA" id="MIFCNCY"/>
<dbReference type="OrthoDB" id="409725at2759"/>
<dbReference type="Proteomes" id="UP000007015">
    <property type="component" value="Chromosome 2"/>
</dbReference>
<dbReference type="GO" id="GO:0005886">
    <property type="term" value="C:plasma membrane"/>
    <property type="evidence" value="ECO:0000250"/>
    <property type="project" value="UniProtKB"/>
</dbReference>
<dbReference type="GO" id="GO:0051119">
    <property type="term" value="F:sugar transmembrane transporter activity"/>
    <property type="evidence" value="ECO:0000250"/>
    <property type="project" value="UniProtKB"/>
</dbReference>
<dbReference type="FunFam" id="1.20.1280.290:FF:000001">
    <property type="entry name" value="Bidirectional sugar transporter SWEET"/>
    <property type="match status" value="1"/>
</dbReference>
<dbReference type="FunFam" id="1.20.1280.290:FF:000002">
    <property type="entry name" value="Bidirectional sugar transporter SWEET"/>
    <property type="match status" value="1"/>
</dbReference>
<dbReference type="Gene3D" id="1.20.1280.290">
    <property type="match status" value="2"/>
</dbReference>
<dbReference type="InterPro" id="IPR047664">
    <property type="entry name" value="SWEET"/>
</dbReference>
<dbReference type="InterPro" id="IPR004316">
    <property type="entry name" value="SWEET_rpt"/>
</dbReference>
<dbReference type="PANTHER" id="PTHR10791:SF130">
    <property type="entry name" value="BIDIRECTIONAL SUGAR TRANSPORTER SWEET6-RELATED"/>
    <property type="match status" value="1"/>
</dbReference>
<dbReference type="PANTHER" id="PTHR10791">
    <property type="entry name" value="RAG1-ACTIVATING PROTEIN 1"/>
    <property type="match status" value="1"/>
</dbReference>
<dbReference type="Pfam" id="PF03083">
    <property type="entry name" value="MtN3_slv"/>
    <property type="match status" value="2"/>
</dbReference>
<keyword id="KW-1003">Cell membrane</keyword>
<keyword id="KW-0325">Glycoprotein</keyword>
<keyword id="KW-0472">Membrane</keyword>
<keyword id="KW-1185">Reference proteome</keyword>
<keyword id="KW-0677">Repeat</keyword>
<keyword id="KW-0762">Sugar transport</keyword>
<keyword id="KW-0812">Transmembrane</keyword>
<keyword id="KW-1133">Transmembrane helix</keyword>
<keyword id="KW-0813">Transport</keyword>
<name>SWET4_ORYSI</name>
<accession>A2X3S3</accession>
<accession>A6N106</accession>